<organism>
    <name type="scientific">Schizosaccharomyces pombe (strain 972 / ATCC 24843)</name>
    <name type="common">Fission yeast</name>
    <dbReference type="NCBI Taxonomy" id="284812"/>
    <lineage>
        <taxon>Eukaryota</taxon>
        <taxon>Fungi</taxon>
        <taxon>Dikarya</taxon>
        <taxon>Ascomycota</taxon>
        <taxon>Taphrinomycotina</taxon>
        <taxon>Schizosaccharomycetes</taxon>
        <taxon>Schizosaccharomycetales</taxon>
        <taxon>Schizosaccharomycetaceae</taxon>
        <taxon>Schizosaccharomyces</taxon>
    </lineage>
</organism>
<evidence type="ECO:0000255" key="1"/>
<evidence type="ECO:0000269" key="2">
    <source>
    </source>
</evidence>
<evidence type="ECO:0000269" key="3">
    <source>
    </source>
</evidence>
<feature type="transit peptide" description="Mitochondrion" evidence="1">
    <location>
        <begin position="1"/>
        <end position="36"/>
    </location>
</feature>
<feature type="chain" id="PRO_0000352820" description="Pentatricopeptide repeat-containing protein 1, mitochondrial">
    <location>
        <begin position="37"/>
        <end position="697"/>
    </location>
</feature>
<feature type="repeat" description="PPR 1">
    <location>
        <begin position="257"/>
        <end position="288"/>
    </location>
</feature>
<feature type="repeat" description="PPR 2">
    <location>
        <begin position="294"/>
        <end position="328"/>
    </location>
</feature>
<sequence length="697" mass="81070">MLKRAHYVALHVTLNHNGLSYQRVFSCLTQFPMLRHSSTAAKNNVSMISKFQAPEDKFFPSFSLKSMPKQSSHMSASLLNSLNTSMKKSFSRKKYREAVSLFRKNLWKYEESWIRNQDFIDCCIIACSAYEKLCQPLRIKKTFIILSQLCPKLPAELCRVFLSYATGCVNYGHNVALTCFENSPKELIDYNYWLSWLSFSKSSPVVLWLTFTRISSAGLSPNAETFEILLVAFASQKNFWFFEKTYDLFMQSKLTWRPFTYRVLIESFMKFGNFEEAEKLAYSYVKNKIDSLSSDVFFSAILKFYAVGGDFQGFKKLLSFMTDYNVNFSVSTLNQLLRLNLYHAMDEKISTFSSEHITKLIEQQIKPDLESMLIISEYLNEYKPSPKMRELINWLYSNFHLPKTVSLHFLREVQSLVFRYPLLHSKIHLAISTLKDSGCDWNVGLSYLNWLFVNKRITEAINFFYTITINAGTRPPNELFDVFISNLLKFTSAETTSSAIRKVQSKYPSMCGSSPAIKLILFSKSFSVLQSTSEKIEQLLVSFQRNPSAYSKSFTLALAEWLFSRRLFQSALLYSFKVSDVDDSHFSFRSQILICWCYYRLNDFKSLIQHTNNLLQSNNASLLRRLAATLYRIQIRENNGYKRVLLDRLRKKAILRAFPSRTLNRTEKVKLYNEDAKFRSIFSRVLLHQSHLGNVIS</sequence>
<gene>
    <name type="primary">ppr1</name>
    <name type="ORF">SPBC1604.02c</name>
</gene>
<name>PPR1_SCHPO</name>
<proteinExistence type="predicted"/>
<dbReference type="EMBL" id="CU329671">
    <property type="protein sequence ID" value="CAA22335.1"/>
    <property type="molecule type" value="Genomic_DNA"/>
</dbReference>
<dbReference type="PIR" id="T39512">
    <property type="entry name" value="T39512"/>
</dbReference>
<dbReference type="RefSeq" id="NP_596638.1">
    <property type="nucleotide sequence ID" value="NM_001022559.2"/>
</dbReference>
<dbReference type="BioGRID" id="276407">
    <property type="interactions" value="3"/>
</dbReference>
<dbReference type="STRING" id="284812.O94368"/>
<dbReference type="PaxDb" id="4896-SPBC1604.02c.1"/>
<dbReference type="EnsemblFungi" id="SPBC1604.02c.1">
    <property type="protein sequence ID" value="SPBC1604.02c.1:pep"/>
    <property type="gene ID" value="SPBC1604.02c"/>
</dbReference>
<dbReference type="GeneID" id="2539860"/>
<dbReference type="KEGG" id="spo:2539860"/>
<dbReference type="PomBase" id="SPBC1604.02c">
    <property type="gene designation" value="ppr1"/>
</dbReference>
<dbReference type="VEuPathDB" id="FungiDB:SPBC1604.02c"/>
<dbReference type="HOGENOM" id="CLU_394910_0_0_1"/>
<dbReference type="InParanoid" id="O94368"/>
<dbReference type="OMA" id="CWCYYRL"/>
<dbReference type="PRO" id="PR:O94368"/>
<dbReference type="Proteomes" id="UP000002485">
    <property type="component" value="Chromosome II"/>
</dbReference>
<dbReference type="GO" id="GO:0005759">
    <property type="term" value="C:mitochondrial matrix"/>
    <property type="evidence" value="ECO:0000305"/>
    <property type="project" value="PomBase"/>
</dbReference>
<dbReference type="GO" id="GO:0005739">
    <property type="term" value="C:mitochondrion"/>
    <property type="evidence" value="ECO:0000314"/>
    <property type="project" value="PomBase"/>
</dbReference>
<dbReference type="GO" id="GO:0003729">
    <property type="term" value="F:mRNA binding"/>
    <property type="evidence" value="ECO:0000318"/>
    <property type="project" value="GO_Central"/>
</dbReference>
<dbReference type="GO" id="GO:0140053">
    <property type="term" value="P:mitochondrial gene expression"/>
    <property type="evidence" value="ECO:0000315"/>
    <property type="project" value="PomBase"/>
</dbReference>
<dbReference type="Gene3D" id="1.25.40.10">
    <property type="entry name" value="Tetratricopeptide repeat domain"/>
    <property type="match status" value="1"/>
</dbReference>
<dbReference type="InterPro" id="IPR050667">
    <property type="entry name" value="PPR-containing_protein"/>
</dbReference>
<dbReference type="InterPro" id="IPR011990">
    <property type="entry name" value="TPR-like_helical_dom_sf"/>
</dbReference>
<dbReference type="PANTHER" id="PTHR47939">
    <property type="entry name" value="MEMBRANE-ASSOCIATED SALT-INDUCIBLE PROTEIN-LIKE"/>
    <property type="match status" value="1"/>
</dbReference>
<dbReference type="PANTHER" id="PTHR47939:SF13">
    <property type="entry name" value="OS03G0201400 PROTEIN"/>
    <property type="match status" value="1"/>
</dbReference>
<protein>
    <recommendedName>
        <fullName>Pentatricopeptide repeat-containing protein 1, mitochondrial</fullName>
    </recommendedName>
</protein>
<accession>O94368</accession>
<keyword id="KW-0496">Mitochondrion</keyword>
<keyword id="KW-1185">Reference proteome</keyword>
<keyword id="KW-0677">Repeat</keyword>
<keyword id="KW-0809">Transit peptide</keyword>
<comment type="function">
    <text evidence="3">Mitochondrial RNA-binding protein required for the stability of the cox2 and cox3 mRNAs.</text>
</comment>
<comment type="subcellular location">
    <subcellularLocation>
        <location evidence="2 3">Mitochondrion</location>
    </subcellularLocation>
</comment>
<comment type="disruption phenotype">
    <text evidence="3">Impairs growth on galactose.</text>
</comment>
<reference key="1">
    <citation type="journal article" date="2002" name="Nature">
        <title>The genome sequence of Schizosaccharomyces pombe.</title>
        <authorList>
            <person name="Wood V."/>
            <person name="Gwilliam R."/>
            <person name="Rajandream M.A."/>
            <person name="Lyne M.H."/>
            <person name="Lyne R."/>
            <person name="Stewart A."/>
            <person name="Sgouros J.G."/>
            <person name="Peat N."/>
            <person name="Hayles J."/>
            <person name="Baker S.G."/>
            <person name="Basham D."/>
            <person name="Bowman S."/>
            <person name="Brooks K."/>
            <person name="Brown D."/>
            <person name="Brown S."/>
            <person name="Chillingworth T."/>
            <person name="Churcher C.M."/>
            <person name="Collins M."/>
            <person name="Connor R."/>
            <person name="Cronin A."/>
            <person name="Davis P."/>
            <person name="Feltwell T."/>
            <person name="Fraser A."/>
            <person name="Gentles S."/>
            <person name="Goble A."/>
            <person name="Hamlin N."/>
            <person name="Harris D.E."/>
            <person name="Hidalgo J."/>
            <person name="Hodgson G."/>
            <person name="Holroyd S."/>
            <person name="Hornsby T."/>
            <person name="Howarth S."/>
            <person name="Huckle E.J."/>
            <person name="Hunt S."/>
            <person name="Jagels K."/>
            <person name="James K.D."/>
            <person name="Jones L."/>
            <person name="Jones M."/>
            <person name="Leather S."/>
            <person name="McDonald S."/>
            <person name="McLean J."/>
            <person name="Mooney P."/>
            <person name="Moule S."/>
            <person name="Mungall K.L."/>
            <person name="Murphy L.D."/>
            <person name="Niblett D."/>
            <person name="Odell C."/>
            <person name="Oliver K."/>
            <person name="O'Neil S."/>
            <person name="Pearson D."/>
            <person name="Quail M.A."/>
            <person name="Rabbinowitsch E."/>
            <person name="Rutherford K.M."/>
            <person name="Rutter S."/>
            <person name="Saunders D."/>
            <person name="Seeger K."/>
            <person name="Sharp S."/>
            <person name="Skelton J."/>
            <person name="Simmonds M.N."/>
            <person name="Squares R."/>
            <person name="Squares S."/>
            <person name="Stevens K."/>
            <person name="Taylor K."/>
            <person name="Taylor R.G."/>
            <person name="Tivey A."/>
            <person name="Walsh S.V."/>
            <person name="Warren T."/>
            <person name="Whitehead S."/>
            <person name="Woodward J.R."/>
            <person name="Volckaert G."/>
            <person name="Aert R."/>
            <person name="Robben J."/>
            <person name="Grymonprez B."/>
            <person name="Weltjens I."/>
            <person name="Vanstreels E."/>
            <person name="Rieger M."/>
            <person name="Schaefer M."/>
            <person name="Mueller-Auer S."/>
            <person name="Gabel C."/>
            <person name="Fuchs M."/>
            <person name="Duesterhoeft A."/>
            <person name="Fritzc C."/>
            <person name="Holzer E."/>
            <person name="Moestl D."/>
            <person name="Hilbert H."/>
            <person name="Borzym K."/>
            <person name="Langer I."/>
            <person name="Beck A."/>
            <person name="Lehrach H."/>
            <person name="Reinhardt R."/>
            <person name="Pohl T.M."/>
            <person name="Eger P."/>
            <person name="Zimmermann W."/>
            <person name="Wedler H."/>
            <person name="Wambutt R."/>
            <person name="Purnelle B."/>
            <person name="Goffeau A."/>
            <person name="Cadieu E."/>
            <person name="Dreano S."/>
            <person name="Gloux S."/>
            <person name="Lelaure V."/>
            <person name="Mottier S."/>
            <person name="Galibert F."/>
            <person name="Aves S.J."/>
            <person name="Xiang Z."/>
            <person name="Hunt C."/>
            <person name="Moore K."/>
            <person name="Hurst S.M."/>
            <person name="Lucas M."/>
            <person name="Rochet M."/>
            <person name="Gaillardin C."/>
            <person name="Tallada V.A."/>
            <person name="Garzon A."/>
            <person name="Thode G."/>
            <person name="Daga R.R."/>
            <person name="Cruzado L."/>
            <person name="Jimenez J."/>
            <person name="Sanchez M."/>
            <person name="del Rey F."/>
            <person name="Benito J."/>
            <person name="Dominguez A."/>
            <person name="Revuelta J.L."/>
            <person name="Moreno S."/>
            <person name="Armstrong J."/>
            <person name="Forsburg S.L."/>
            <person name="Cerutti L."/>
            <person name="Lowe T."/>
            <person name="McCombie W.R."/>
            <person name="Paulsen I."/>
            <person name="Potashkin J."/>
            <person name="Shpakovski G.V."/>
            <person name="Ussery D."/>
            <person name="Barrell B.G."/>
            <person name="Nurse P."/>
        </authorList>
    </citation>
    <scope>NUCLEOTIDE SEQUENCE [LARGE SCALE GENOMIC DNA]</scope>
    <source>
        <strain>972 / ATCC 24843</strain>
    </source>
</reference>
<reference key="2">
    <citation type="journal article" date="2006" name="Nat. Biotechnol.">
        <title>ORFeome cloning and global analysis of protein localization in the fission yeast Schizosaccharomyces pombe.</title>
        <authorList>
            <person name="Matsuyama A."/>
            <person name="Arai R."/>
            <person name="Yashiroda Y."/>
            <person name="Shirai A."/>
            <person name="Kamata A."/>
            <person name="Sekido S."/>
            <person name="Kobayashi Y."/>
            <person name="Hashimoto A."/>
            <person name="Hamamoto M."/>
            <person name="Hiraoka Y."/>
            <person name="Horinouchi S."/>
            <person name="Yoshida M."/>
        </authorList>
    </citation>
    <scope>SUBCELLULAR LOCATION [LARGE SCALE ANALYSIS]</scope>
</reference>
<reference key="3">
    <citation type="journal article" date="2011" name="Nucleic Acids Res.">
        <title>A genome wide study in fission yeast reveals nine PPR proteins that regulate mitochondrial gene expression.</title>
        <authorList>
            <person name="Kuhl I."/>
            <person name="Dujeancourt L."/>
            <person name="Gaisne M."/>
            <person name="Herbert C.J."/>
            <person name="Bonnefoy N."/>
        </authorList>
    </citation>
    <scope>DOMAIN</scope>
    <scope>SUBCELLULAR LOCATION</scope>
    <scope>DISRUPTION PHENOTYPE</scope>
    <scope>FUNCTION</scope>
</reference>